<protein>
    <recommendedName>
        <fullName>Transketolase 2</fullName>
        <shortName>TK 2</shortName>
        <ecNumber>2.2.1.1</ecNumber>
    </recommendedName>
</protein>
<proteinExistence type="inferred from homology"/>
<comment type="function">
    <text evidence="1">Catalyzes the transfer of a two-carbon ketol group from a ketose donor to an aldose acceptor, via a covalent intermediate with the cofactor thiamine pyrophosphate.</text>
</comment>
<comment type="catalytic activity">
    <reaction>
        <text>D-sedoheptulose 7-phosphate + D-glyceraldehyde 3-phosphate = aldehydo-D-ribose 5-phosphate + D-xylulose 5-phosphate</text>
        <dbReference type="Rhea" id="RHEA:10508"/>
        <dbReference type="ChEBI" id="CHEBI:57483"/>
        <dbReference type="ChEBI" id="CHEBI:57737"/>
        <dbReference type="ChEBI" id="CHEBI:58273"/>
        <dbReference type="ChEBI" id="CHEBI:59776"/>
        <dbReference type="EC" id="2.2.1.1"/>
    </reaction>
</comment>
<comment type="cofactor">
    <cofactor evidence="1">
        <name>Mg(2+)</name>
        <dbReference type="ChEBI" id="CHEBI:18420"/>
    </cofactor>
    <cofactor evidence="1">
        <name>Ca(2+)</name>
        <dbReference type="ChEBI" id="CHEBI:29108"/>
    </cofactor>
    <cofactor evidence="1">
        <name>Mn(2+)</name>
        <dbReference type="ChEBI" id="CHEBI:29035"/>
    </cofactor>
    <cofactor evidence="1">
        <name>Co(2+)</name>
        <dbReference type="ChEBI" id="CHEBI:48828"/>
    </cofactor>
    <text evidence="1">Binds 1 Mg(2+) ion per subunit. Can also utilize other divalent metal cations, such as Ca(2+), Mn(2+) and Co(2+).</text>
</comment>
<comment type="cofactor">
    <cofactor evidence="1">
        <name>thiamine diphosphate</name>
        <dbReference type="ChEBI" id="CHEBI:58937"/>
    </cofactor>
    <text evidence="1">Binds 1 thiamine pyrophosphate per subunit.</text>
</comment>
<comment type="subunit">
    <text evidence="1">Homodimer.</text>
</comment>
<comment type="similarity">
    <text evidence="2">Belongs to the transketolase family.</text>
</comment>
<dbReference type="EC" id="2.2.1.1"/>
<dbReference type="EMBL" id="AE004439">
    <property type="protein sequence ID" value="AAK03722.1"/>
    <property type="molecule type" value="Genomic_DNA"/>
</dbReference>
<dbReference type="RefSeq" id="WP_010907267.1">
    <property type="nucleotide sequence ID" value="NC_002663.1"/>
</dbReference>
<dbReference type="SMR" id="P57958"/>
<dbReference type="STRING" id="272843.PM1638"/>
<dbReference type="EnsemblBacteria" id="AAK03722">
    <property type="protein sequence ID" value="AAK03722"/>
    <property type="gene ID" value="PM1638"/>
</dbReference>
<dbReference type="KEGG" id="pmu:PM1638"/>
<dbReference type="PATRIC" id="fig|272843.6.peg.1657"/>
<dbReference type="HOGENOM" id="CLU_009227_0_0_6"/>
<dbReference type="OrthoDB" id="8732661at2"/>
<dbReference type="Proteomes" id="UP000000809">
    <property type="component" value="Chromosome"/>
</dbReference>
<dbReference type="GO" id="GO:0005829">
    <property type="term" value="C:cytosol"/>
    <property type="evidence" value="ECO:0007669"/>
    <property type="project" value="TreeGrafter"/>
</dbReference>
<dbReference type="GO" id="GO:0046872">
    <property type="term" value="F:metal ion binding"/>
    <property type="evidence" value="ECO:0007669"/>
    <property type="project" value="UniProtKB-KW"/>
</dbReference>
<dbReference type="GO" id="GO:0004802">
    <property type="term" value="F:transketolase activity"/>
    <property type="evidence" value="ECO:0007669"/>
    <property type="project" value="UniProtKB-EC"/>
</dbReference>
<dbReference type="GO" id="GO:0006098">
    <property type="term" value="P:pentose-phosphate shunt"/>
    <property type="evidence" value="ECO:0007669"/>
    <property type="project" value="TreeGrafter"/>
</dbReference>
<dbReference type="CDD" id="cd07033">
    <property type="entry name" value="TPP_PYR_DXS_TK_like"/>
    <property type="match status" value="1"/>
</dbReference>
<dbReference type="CDD" id="cd02012">
    <property type="entry name" value="TPP_TK"/>
    <property type="match status" value="1"/>
</dbReference>
<dbReference type="FunFam" id="3.40.50.920:FF:000003">
    <property type="entry name" value="Transketolase"/>
    <property type="match status" value="1"/>
</dbReference>
<dbReference type="FunFam" id="3.40.50.970:FF:000003">
    <property type="entry name" value="Transketolase"/>
    <property type="match status" value="1"/>
</dbReference>
<dbReference type="FunFam" id="3.40.50.970:FF:000004">
    <property type="entry name" value="Transketolase"/>
    <property type="match status" value="1"/>
</dbReference>
<dbReference type="Gene3D" id="3.40.50.920">
    <property type="match status" value="1"/>
</dbReference>
<dbReference type="Gene3D" id="3.40.50.970">
    <property type="match status" value="2"/>
</dbReference>
<dbReference type="InterPro" id="IPR029061">
    <property type="entry name" value="THDP-binding"/>
</dbReference>
<dbReference type="InterPro" id="IPR009014">
    <property type="entry name" value="Transketo_C/PFOR_II"/>
</dbReference>
<dbReference type="InterPro" id="IPR055152">
    <property type="entry name" value="Transketolase-like_C_2"/>
</dbReference>
<dbReference type="InterPro" id="IPR005475">
    <property type="entry name" value="Transketolase-like_Pyr-bd"/>
</dbReference>
<dbReference type="InterPro" id="IPR005478">
    <property type="entry name" value="Transketolase_bac-like"/>
</dbReference>
<dbReference type="InterPro" id="IPR020826">
    <property type="entry name" value="Transketolase_BS"/>
</dbReference>
<dbReference type="InterPro" id="IPR049557">
    <property type="entry name" value="Transketolase_CS"/>
</dbReference>
<dbReference type="InterPro" id="IPR033247">
    <property type="entry name" value="Transketolase_fam"/>
</dbReference>
<dbReference type="InterPro" id="IPR005474">
    <property type="entry name" value="Transketolase_N"/>
</dbReference>
<dbReference type="NCBIfam" id="TIGR00232">
    <property type="entry name" value="tktlase_bact"/>
    <property type="match status" value="1"/>
</dbReference>
<dbReference type="PANTHER" id="PTHR43522">
    <property type="entry name" value="TRANSKETOLASE"/>
    <property type="match status" value="1"/>
</dbReference>
<dbReference type="PANTHER" id="PTHR43522:SF2">
    <property type="entry name" value="TRANSKETOLASE 1-RELATED"/>
    <property type="match status" value="1"/>
</dbReference>
<dbReference type="Pfam" id="PF02779">
    <property type="entry name" value="Transket_pyr"/>
    <property type="match status" value="1"/>
</dbReference>
<dbReference type="Pfam" id="PF22613">
    <property type="entry name" value="Transketolase_C_1"/>
    <property type="match status" value="1"/>
</dbReference>
<dbReference type="Pfam" id="PF00456">
    <property type="entry name" value="Transketolase_N"/>
    <property type="match status" value="1"/>
</dbReference>
<dbReference type="SMART" id="SM00861">
    <property type="entry name" value="Transket_pyr"/>
    <property type="match status" value="1"/>
</dbReference>
<dbReference type="SUPFAM" id="SSF52518">
    <property type="entry name" value="Thiamin diphosphate-binding fold (THDP-binding)"/>
    <property type="match status" value="2"/>
</dbReference>
<dbReference type="SUPFAM" id="SSF52922">
    <property type="entry name" value="TK C-terminal domain-like"/>
    <property type="match status" value="1"/>
</dbReference>
<dbReference type="PROSITE" id="PS00801">
    <property type="entry name" value="TRANSKETOLASE_1"/>
    <property type="match status" value="1"/>
</dbReference>
<dbReference type="PROSITE" id="PS00802">
    <property type="entry name" value="TRANSKETOLASE_2"/>
    <property type="match status" value="1"/>
</dbReference>
<reference key="1">
    <citation type="journal article" date="2001" name="Proc. Natl. Acad. Sci. U.S.A.">
        <title>Complete genomic sequence of Pasteurella multocida Pm70.</title>
        <authorList>
            <person name="May B.J."/>
            <person name="Zhang Q."/>
            <person name="Li L.L."/>
            <person name="Paustian M.L."/>
            <person name="Whittam T.S."/>
            <person name="Kapur V."/>
        </authorList>
    </citation>
    <scope>NUCLEOTIDE SEQUENCE [LARGE SCALE GENOMIC DNA]</scope>
    <source>
        <strain>Pm70</strain>
    </source>
</reference>
<accession>P57958</accession>
<evidence type="ECO:0000250" key="1"/>
<evidence type="ECO:0000305" key="2"/>
<feature type="chain" id="PRO_0000191865" description="Transketolase 2">
    <location>
        <begin position="1"/>
        <end position="668"/>
    </location>
</feature>
<feature type="active site" description="Proton donor" evidence="1">
    <location>
        <position position="413"/>
    </location>
</feature>
<feature type="binding site" evidence="1">
    <location>
        <position position="26"/>
    </location>
    <ligand>
        <name>substrate</name>
    </ligand>
</feature>
<feature type="binding site" evidence="1">
    <location>
        <position position="66"/>
    </location>
    <ligand>
        <name>thiamine diphosphate</name>
        <dbReference type="ChEBI" id="CHEBI:58937"/>
    </ligand>
</feature>
<feature type="binding site" evidence="1">
    <location>
        <begin position="114"/>
        <end position="116"/>
    </location>
    <ligand>
        <name>thiamine diphosphate</name>
        <dbReference type="ChEBI" id="CHEBI:58937"/>
    </ligand>
</feature>
<feature type="binding site" evidence="1">
    <location>
        <position position="155"/>
    </location>
    <ligand>
        <name>Mg(2+)</name>
        <dbReference type="ChEBI" id="CHEBI:18420"/>
    </ligand>
</feature>
<feature type="binding site" evidence="1">
    <location>
        <position position="156"/>
    </location>
    <ligand>
        <name>thiamine diphosphate</name>
        <dbReference type="ChEBI" id="CHEBI:58937"/>
    </ligand>
</feature>
<feature type="binding site" evidence="1">
    <location>
        <position position="185"/>
    </location>
    <ligand>
        <name>Mg(2+)</name>
        <dbReference type="ChEBI" id="CHEBI:18420"/>
    </ligand>
</feature>
<feature type="binding site" evidence="1">
    <location>
        <position position="185"/>
    </location>
    <ligand>
        <name>thiamine diphosphate</name>
        <dbReference type="ChEBI" id="CHEBI:58937"/>
    </ligand>
</feature>
<feature type="binding site" evidence="1">
    <location>
        <position position="187"/>
    </location>
    <ligand>
        <name>Mg(2+)</name>
        <dbReference type="ChEBI" id="CHEBI:18420"/>
    </ligand>
</feature>
<feature type="binding site" evidence="1">
    <location>
        <position position="261"/>
    </location>
    <ligand>
        <name>substrate</name>
    </ligand>
</feature>
<feature type="binding site" evidence="1">
    <location>
        <position position="261"/>
    </location>
    <ligand>
        <name>thiamine diphosphate</name>
        <dbReference type="ChEBI" id="CHEBI:58937"/>
    </ligand>
</feature>
<feature type="binding site" evidence="1">
    <location>
        <position position="358"/>
    </location>
    <ligand>
        <name>substrate</name>
    </ligand>
</feature>
<feature type="binding site" evidence="1">
    <location>
        <position position="385"/>
    </location>
    <ligand>
        <name>substrate</name>
    </ligand>
</feature>
<feature type="binding site" evidence="1">
    <location>
        <position position="439"/>
    </location>
    <ligand>
        <name>thiamine diphosphate</name>
        <dbReference type="ChEBI" id="CHEBI:58937"/>
    </ligand>
</feature>
<feature type="binding site" evidence="1">
    <location>
        <position position="463"/>
    </location>
    <ligand>
        <name>substrate</name>
    </ligand>
</feature>
<feature type="binding site" evidence="1">
    <location>
        <position position="471"/>
    </location>
    <ligand>
        <name>substrate</name>
    </ligand>
</feature>
<feature type="binding site" evidence="1">
    <location>
        <position position="522"/>
    </location>
    <ligand>
        <name>substrate</name>
    </ligand>
</feature>
<feature type="site" description="Important for catalytic activity" evidence="1">
    <location>
        <position position="26"/>
    </location>
</feature>
<feature type="site" description="Important for catalytic activity" evidence="1">
    <location>
        <position position="261"/>
    </location>
</feature>
<sequence length="668" mass="73355">MATRRELANAIRFLSMDAVQKAKSGHPGAPMGMADIAEVLWRDFLKHNPSNPHWADRDRFILSNGHGSMLIYSLLHLSGYDLSIEDLKQFRQLHSKTPGHPEYGYAPGVETTTGPLGQGITNAVGFAIAEKTLAHQFNRPGHEIVDHHTYVFLGDGCLMEGISHEACSLAGTLGLGKLIAFYDDNNISIDGHVDGWFTDDTQKRFEAYGWHVIPAVDGHNPEQILEAVKQAQAETTKPTLIICKTIIGYGSPNKANSHDCHGAPLGDDEIAAAREFLKWEHAPFEIPAEIYAQWDAKEKGQVAEKAWEEKLAAYAKAYPELAAEFTRRVNAELPANWAAESQAFIEHLQANPANIASRKASQNAIEAYAKLLPEFLGGSADLASSNLTLWSGSKPIRAVENADGNYINYGVREFGMSAIMNGIALHGGFIPYGATFLMFMEYAHNAVRMAALMKQRSLFVYTHDSIGLGEDGPTHQPVEQTSALRLIPNLETWRPCDQVESAVAWKAAVERKEGPSALIFTRQNLAQMDRTAEQLANVARGGYVLRHCCENQNCPDLILIATGSEVELAMKAADVLDAEGVKVRVVSMPSTNVFDKQDAAYRESVLPSHITKRVAIEAGIADFWYKYVGFEGRVVGMNSFGESAPADQLFKLFGFTVENVVAKAKEIL</sequence>
<organism>
    <name type="scientific">Pasteurella multocida (strain Pm70)</name>
    <dbReference type="NCBI Taxonomy" id="272843"/>
    <lineage>
        <taxon>Bacteria</taxon>
        <taxon>Pseudomonadati</taxon>
        <taxon>Pseudomonadota</taxon>
        <taxon>Gammaproteobacteria</taxon>
        <taxon>Pasteurellales</taxon>
        <taxon>Pasteurellaceae</taxon>
        <taxon>Pasteurella</taxon>
    </lineage>
</organism>
<name>TKT2_PASMU</name>
<keyword id="KW-0106">Calcium</keyword>
<keyword id="KW-0460">Magnesium</keyword>
<keyword id="KW-0479">Metal-binding</keyword>
<keyword id="KW-1185">Reference proteome</keyword>
<keyword id="KW-0786">Thiamine pyrophosphate</keyword>
<keyword id="KW-0808">Transferase</keyword>
<gene>
    <name type="primary">tktB</name>
    <name type="ordered locus">PM1638</name>
</gene>